<dbReference type="EMBL" id="M14142">
    <property type="protein sequence ID" value="AAA30015.1"/>
    <property type="molecule type" value="Genomic_DNA"/>
</dbReference>
<dbReference type="PIR" id="B25077">
    <property type="entry name" value="B25077"/>
</dbReference>
<dbReference type="SMR" id="P07794"/>
<dbReference type="GO" id="GO:0000786">
    <property type="term" value="C:nucleosome"/>
    <property type="evidence" value="ECO:0007669"/>
    <property type="project" value="UniProtKB-KW"/>
</dbReference>
<dbReference type="GO" id="GO:0005634">
    <property type="term" value="C:nucleus"/>
    <property type="evidence" value="ECO:0007669"/>
    <property type="project" value="UniProtKB-SubCell"/>
</dbReference>
<dbReference type="GO" id="GO:0003677">
    <property type="term" value="F:DNA binding"/>
    <property type="evidence" value="ECO:0007669"/>
    <property type="project" value="UniProtKB-KW"/>
</dbReference>
<dbReference type="GO" id="GO:0046982">
    <property type="term" value="F:protein heterodimerization activity"/>
    <property type="evidence" value="ECO:0007669"/>
    <property type="project" value="InterPro"/>
</dbReference>
<dbReference type="GO" id="GO:0044877">
    <property type="term" value="F:protein-containing complex binding"/>
    <property type="evidence" value="ECO:0000250"/>
    <property type="project" value="UniProtKB"/>
</dbReference>
<dbReference type="GO" id="GO:0030527">
    <property type="term" value="F:structural constituent of chromatin"/>
    <property type="evidence" value="ECO:0007669"/>
    <property type="project" value="InterPro"/>
</dbReference>
<dbReference type="CDD" id="cd22910">
    <property type="entry name" value="HFD_H2B"/>
    <property type="match status" value="1"/>
</dbReference>
<dbReference type="FunFam" id="1.10.20.10:FF:000016">
    <property type="entry name" value="Histone H2B"/>
    <property type="match status" value="1"/>
</dbReference>
<dbReference type="Gene3D" id="1.10.20.10">
    <property type="entry name" value="Histone, subunit A"/>
    <property type="match status" value="1"/>
</dbReference>
<dbReference type="InterPro" id="IPR009072">
    <property type="entry name" value="Histone-fold"/>
</dbReference>
<dbReference type="InterPro" id="IPR007125">
    <property type="entry name" value="Histone_H2A/H2B/H3"/>
</dbReference>
<dbReference type="InterPro" id="IPR000558">
    <property type="entry name" value="Histone_H2B"/>
</dbReference>
<dbReference type="InterPro" id="IPR055333">
    <property type="entry name" value="HISTONE_H2B_site"/>
</dbReference>
<dbReference type="PANTHER" id="PTHR23428">
    <property type="entry name" value="HISTONE H2B"/>
    <property type="match status" value="1"/>
</dbReference>
<dbReference type="Pfam" id="PF00125">
    <property type="entry name" value="Histone"/>
    <property type="match status" value="1"/>
</dbReference>
<dbReference type="PRINTS" id="PR00621">
    <property type="entry name" value="HISTONEH2B"/>
</dbReference>
<dbReference type="SMART" id="SM00427">
    <property type="entry name" value="H2B"/>
    <property type="match status" value="1"/>
</dbReference>
<dbReference type="SUPFAM" id="SSF47113">
    <property type="entry name" value="Histone-fold"/>
    <property type="match status" value="1"/>
</dbReference>
<dbReference type="PROSITE" id="PS00357">
    <property type="entry name" value="HISTONE_H2B"/>
    <property type="match status" value="1"/>
</dbReference>
<name>H2BL1_PSAMI</name>
<feature type="initiator methionine" description="Removed" evidence="1">
    <location>
        <position position="1"/>
    </location>
</feature>
<feature type="chain" id="PRO_0000071893" description="Late histone H2B.2.1">
    <location>
        <begin position="2"/>
        <end position="124"/>
    </location>
</feature>
<feature type="region of interest" description="Disordered" evidence="2">
    <location>
        <begin position="1"/>
        <end position="32"/>
    </location>
</feature>
<feature type="compositionally biased region" description="Basic residues" evidence="2">
    <location>
        <begin position="10"/>
        <end position="19"/>
    </location>
</feature>
<feature type="glycosylation site" description="O-linked (GlcNAc) serine" evidence="1">
    <location>
        <position position="111"/>
    </location>
</feature>
<feature type="cross-link" description="Glycyl lysine isopeptide (Lys-Gly) (interchain with G-Cter in ubiquitin)" evidence="1">
    <location>
        <position position="119"/>
    </location>
</feature>
<keyword id="KW-0158">Chromosome</keyword>
<keyword id="KW-0238">DNA-binding</keyword>
<keyword id="KW-0325">Glycoprotein</keyword>
<keyword id="KW-1017">Isopeptide bond</keyword>
<keyword id="KW-0544">Nucleosome core</keyword>
<keyword id="KW-0539">Nucleus</keyword>
<keyword id="KW-0832">Ubl conjugation</keyword>
<comment type="function">
    <text>Core component of nucleosome. Nucleosomes wrap and compact DNA into chromatin, limiting DNA accessibility to the cellular machineries which require DNA as a template. Histones thereby play a central role in transcription regulation, DNA repair, DNA replication and chromosomal stability. DNA accessibility is regulated via a complex set of post-translational modifications of histones, also called histone code, and nucleosome remodeling.</text>
</comment>
<comment type="subunit">
    <text>The nucleosome is a histone octamer containing two molecules each of H2A, H2B, H3 and H4 assembled in one H3-H4 heterotetramer and two H2A-H2B heterodimers. The octamer wraps approximately 147 bp of DNA.</text>
</comment>
<comment type="subcellular location">
    <subcellularLocation>
        <location>Nucleus</location>
    </subcellularLocation>
    <subcellularLocation>
        <location>Chromosome</location>
    </subcellularLocation>
</comment>
<comment type="PTM">
    <text evidence="1">Monoubiquitination of Lys-119 gives a specific tag for epigenetic transcriptional activation and is also prerequisite for histone H3 'Lys-4' and 'Lys-79' methylation.</text>
</comment>
<comment type="PTM">
    <text evidence="1">GlcNAcylation at Ser-111 promotes monoubiquitination of Lys-119. It fluctuates in response to extracellular glucose, and associates with transcribed genes (By similarity).</text>
</comment>
<comment type="similarity">
    <text evidence="3">Belongs to the histone H2B family.</text>
</comment>
<organism>
    <name type="scientific">Psammechinus miliaris</name>
    <name type="common">Green sea urchin</name>
    <name type="synonym">Echinus miliaris</name>
    <dbReference type="NCBI Taxonomy" id="7660"/>
    <lineage>
        <taxon>Eukaryota</taxon>
        <taxon>Metazoa</taxon>
        <taxon>Echinodermata</taxon>
        <taxon>Eleutherozoa</taxon>
        <taxon>Echinozoa</taxon>
        <taxon>Echinoidea</taxon>
        <taxon>Euechinoidea</taxon>
        <taxon>Echinacea</taxon>
        <taxon>Camarodonta</taxon>
        <taxon>Echinidea</taxon>
        <taxon>Parechinidae</taxon>
        <taxon>Psammechinus</taxon>
    </lineage>
</organism>
<protein>
    <recommendedName>
        <fullName>Late histone H2B.2.1</fullName>
    </recommendedName>
</protein>
<proteinExistence type="inferred from homology"/>
<accession>P07794</accession>
<evidence type="ECO:0000250" key="1"/>
<evidence type="ECO:0000256" key="2">
    <source>
        <dbReference type="SAM" id="MobiDB-lite"/>
    </source>
</evidence>
<evidence type="ECO:0000305" key="3"/>
<reference key="1">
    <citation type="journal article" date="1986" name="Mol. Cell. Biol.">
        <title>Characterization of two nonallelic pairs of late histone H2A and H2B genes of the sea urchin: differential regulation in the embryo and tissue-specific expression in the adult.</title>
        <authorList>
            <person name="Kemler I."/>
            <person name="Busslinger M."/>
        </authorList>
    </citation>
    <scope>NUCLEOTIDE SEQUENCE [GENOMIC DNA]</scope>
</reference>
<sequence>MPAKQTSGKGAKKAGKAKGRPAGASKTRRRKRKESYGIYIYKVLKQVHPDTGISSKAMSIMNSFVNDVFERIAGEASRLAHYNKKSTISSREVQTAVRLLLPGELAKHAVSEGTKAVTKYTTSK</sequence>